<organism>
    <name type="scientific">Staphylococcus aureus (strain MRSA252)</name>
    <dbReference type="NCBI Taxonomy" id="282458"/>
    <lineage>
        <taxon>Bacteria</taxon>
        <taxon>Bacillati</taxon>
        <taxon>Bacillota</taxon>
        <taxon>Bacilli</taxon>
        <taxon>Bacillales</taxon>
        <taxon>Staphylococcaceae</taxon>
        <taxon>Staphylococcus</taxon>
    </lineage>
</organism>
<evidence type="ECO:0000255" key="1">
    <source>
        <dbReference type="HAMAP-Rule" id="MF_00212"/>
    </source>
</evidence>
<evidence type="ECO:0000305" key="2"/>
<comment type="catalytic activity">
    <reaction evidence="1">
        <text>(S)-malate + a quinone = a quinol + oxaloacetate</text>
        <dbReference type="Rhea" id="RHEA:46012"/>
        <dbReference type="ChEBI" id="CHEBI:15589"/>
        <dbReference type="ChEBI" id="CHEBI:16452"/>
        <dbReference type="ChEBI" id="CHEBI:24646"/>
        <dbReference type="ChEBI" id="CHEBI:132124"/>
        <dbReference type="EC" id="1.1.5.4"/>
    </reaction>
</comment>
<comment type="cofactor">
    <cofactor evidence="1">
        <name>FAD</name>
        <dbReference type="ChEBI" id="CHEBI:57692"/>
    </cofactor>
</comment>
<comment type="pathway">
    <text evidence="1">Carbohydrate metabolism; tricarboxylic acid cycle; oxaloacetate from (S)-malate (quinone route): step 1/1.</text>
</comment>
<comment type="similarity">
    <text evidence="1">Belongs to the MQO family.</text>
</comment>
<comment type="sequence caution" evidence="2">
    <conflict type="erroneous initiation">
        <sequence resource="EMBL-CDS" id="CAG41436"/>
    </conflict>
</comment>
<feature type="chain" id="PRO_0000128743" description="Probable malate:quinone oxidoreductase 1">
    <location>
        <begin position="1"/>
        <end position="492"/>
    </location>
</feature>
<gene>
    <name evidence="1" type="primary">mqo1</name>
    <name type="ordered locus">SAR2454</name>
</gene>
<name>MQO1_STAAR</name>
<sequence>MTTQHSKTDVILIGGGIMSATLGTLLKELSPEKNIKVFEKLAQPGEESSNVWNNAGTGHSALCELNYTKEGKDGTVDCSKAIKINEQYQISKQFWAYLVKTGQLDNPDRFIQAVPHMSFVIGEDNVAFIKSRVATLKKNVLFEKMKLSQDEEEMKSWVPLMIEGRKSDEPIALTYDETGTDVNFGALTAKLFDNLEQRGVEIQYKQNVLDIKKQKSGAWLVKVKDLETNETTTYESDFVFIGAGGASLPLLQKTGIKQSKHIGGFPVSGLFLRCTNQEVIDRHHAKVYGKAAVGAPPMSVPHLDTRFVDGKRSLLFGPFAGFSPKFLKTGSHMDLIKSVKPNNIVTMLSAGIKEMSLTKYLVSQLMLSNDERMDDLRVFFPNAKNEDWEVITAGQRVQVIKDTEDSKGNLQFGTEVITSDDGTLAALLGASPGASTAVDIMFDVLQRCYRDEFKGWEPKIKEMVPSFGYRLTDHEDLYHKINEEVTKYLQVK</sequence>
<proteinExistence type="inferred from homology"/>
<accession>Q6GE66</accession>
<protein>
    <recommendedName>
        <fullName evidence="1">Probable malate:quinone oxidoreductase 1</fullName>
        <ecNumber evidence="1">1.1.5.4</ecNumber>
    </recommendedName>
    <alternativeName>
        <fullName evidence="1">MQO 1</fullName>
    </alternativeName>
    <alternativeName>
        <fullName evidence="1">Malate dehydrogenase [quinone] 1</fullName>
    </alternativeName>
</protein>
<dbReference type="EC" id="1.1.5.4" evidence="1"/>
<dbReference type="EMBL" id="BX571856">
    <property type="protein sequence ID" value="CAG41436.1"/>
    <property type="status" value="ALT_INIT"/>
    <property type="molecule type" value="Genomic_DNA"/>
</dbReference>
<dbReference type="SMR" id="Q6GE66"/>
<dbReference type="KEGG" id="sar:SAR2454"/>
<dbReference type="HOGENOM" id="CLU_028151_0_0_9"/>
<dbReference type="UniPathway" id="UPA00223">
    <property type="reaction ID" value="UER01008"/>
</dbReference>
<dbReference type="Proteomes" id="UP000000596">
    <property type="component" value="Chromosome"/>
</dbReference>
<dbReference type="GO" id="GO:0047545">
    <property type="term" value="F:2-hydroxyglutarate dehydrogenase activity"/>
    <property type="evidence" value="ECO:0007669"/>
    <property type="project" value="TreeGrafter"/>
</dbReference>
<dbReference type="GO" id="GO:0008924">
    <property type="term" value="F:L-malate dehydrogenase (quinone) activity"/>
    <property type="evidence" value="ECO:0007669"/>
    <property type="project" value="UniProtKB-UniRule"/>
</dbReference>
<dbReference type="GO" id="GO:0006099">
    <property type="term" value="P:tricarboxylic acid cycle"/>
    <property type="evidence" value="ECO:0007669"/>
    <property type="project" value="UniProtKB-UniRule"/>
</dbReference>
<dbReference type="Gene3D" id="3.30.9.10">
    <property type="entry name" value="D-Amino Acid Oxidase, subunit A, domain 2"/>
    <property type="match status" value="1"/>
</dbReference>
<dbReference type="Gene3D" id="3.50.50.60">
    <property type="entry name" value="FAD/NAD(P)-binding domain"/>
    <property type="match status" value="1"/>
</dbReference>
<dbReference type="HAMAP" id="MF_00212">
    <property type="entry name" value="MQO"/>
    <property type="match status" value="1"/>
</dbReference>
<dbReference type="InterPro" id="IPR036188">
    <property type="entry name" value="FAD/NAD-bd_sf"/>
</dbReference>
<dbReference type="InterPro" id="IPR006231">
    <property type="entry name" value="MQO"/>
</dbReference>
<dbReference type="NCBIfam" id="TIGR01320">
    <property type="entry name" value="mal_quin_oxido"/>
    <property type="match status" value="1"/>
</dbReference>
<dbReference type="NCBIfam" id="NF003603">
    <property type="entry name" value="PRK05257.1-1"/>
    <property type="match status" value="1"/>
</dbReference>
<dbReference type="NCBIfam" id="NF003604">
    <property type="entry name" value="PRK05257.1-3"/>
    <property type="match status" value="1"/>
</dbReference>
<dbReference type="NCBIfam" id="NF003605">
    <property type="entry name" value="PRK05257.1-4"/>
    <property type="match status" value="1"/>
</dbReference>
<dbReference type="NCBIfam" id="NF003606">
    <property type="entry name" value="PRK05257.2-1"/>
    <property type="match status" value="1"/>
</dbReference>
<dbReference type="NCBIfam" id="NF003611">
    <property type="entry name" value="PRK05257.3-2"/>
    <property type="match status" value="1"/>
</dbReference>
<dbReference type="NCBIfam" id="NF009875">
    <property type="entry name" value="PRK13339.1"/>
    <property type="match status" value="1"/>
</dbReference>
<dbReference type="PANTHER" id="PTHR43104">
    <property type="entry name" value="L-2-HYDROXYGLUTARATE DEHYDROGENASE, MITOCHONDRIAL"/>
    <property type="match status" value="1"/>
</dbReference>
<dbReference type="PANTHER" id="PTHR43104:SF2">
    <property type="entry name" value="L-2-HYDROXYGLUTARATE DEHYDROGENASE, MITOCHONDRIAL"/>
    <property type="match status" value="1"/>
</dbReference>
<dbReference type="Pfam" id="PF06039">
    <property type="entry name" value="Mqo"/>
    <property type="match status" value="1"/>
</dbReference>
<dbReference type="SUPFAM" id="SSF51905">
    <property type="entry name" value="FAD/NAD(P)-binding domain"/>
    <property type="match status" value="1"/>
</dbReference>
<reference key="1">
    <citation type="journal article" date="2004" name="Proc. Natl. Acad. Sci. U.S.A.">
        <title>Complete genomes of two clinical Staphylococcus aureus strains: evidence for the rapid evolution of virulence and drug resistance.</title>
        <authorList>
            <person name="Holden M.T.G."/>
            <person name="Feil E.J."/>
            <person name="Lindsay J.A."/>
            <person name="Peacock S.J."/>
            <person name="Day N.P.J."/>
            <person name="Enright M.C."/>
            <person name="Foster T.J."/>
            <person name="Moore C.E."/>
            <person name="Hurst L."/>
            <person name="Atkin R."/>
            <person name="Barron A."/>
            <person name="Bason N."/>
            <person name="Bentley S.D."/>
            <person name="Chillingworth C."/>
            <person name="Chillingworth T."/>
            <person name="Churcher C."/>
            <person name="Clark L."/>
            <person name="Corton C."/>
            <person name="Cronin A."/>
            <person name="Doggett J."/>
            <person name="Dowd L."/>
            <person name="Feltwell T."/>
            <person name="Hance Z."/>
            <person name="Harris B."/>
            <person name="Hauser H."/>
            <person name="Holroyd S."/>
            <person name="Jagels K."/>
            <person name="James K.D."/>
            <person name="Lennard N."/>
            <person name="Line A."/>
            <person name="Mayes R."/>
            <person name="Moule S."/>
            <person name="Mungall K."/>
            <person name="Ormond D."/>
            <person name="Quail M.A."/>
            <person name="Rabbinowitsch E."/>
            <person name="Rutherford K.M."/>
            <person name="Sanders M."/>
            <person name="Sharp S."/>
            <person name="Simmonds M."/>
            <person name="Stevens K."/>
            <person name="Whitehead S."/>
            <person name="Barrell B.G."/>
            <person name="Spratt B.G."/>
            <person name="Parkhill J."/>
        </authorList>
    </citation>
    <scope>NUCLEOTIDE SEQUENCE [LARGE SCALE GENOMIC DNA]</scope>
    <source>
        <strain>MRSA252</strain>
    </source>
</reference>
<keyword id="KW-0274">FAD</keyword>
<keyword id="KW-0285">Flavoprotein</keyword>
<keyword id="KW-0560">Oxidoreductase</keyword>
<keyword id="KW-0816">Tricarboxylic acid cycle</keyword>